<comment type="function">
    <text evidence="1">Plays a major role as an activator of AKT family members by inhibiting PPP2CA-mediated dephosphorylation, thereby keeping AKTs activated. Plays a role in preventing motor neuronal death and accelerating the growth of pancreatic beta cells.</text>
</comment>
<comment type="subunit">
    <text evidence="1">Interacts (via C-terminal 330-amino-acid region) with AKT1; AKT2 and AKT3. Interacts with PPP2CA and PPP1CA.</text>
</comment>
<comment type="interaction">
    <interactant intactId="EBI-720180">
        <id>Q9BSF8</id>
    </interactant>
    <interactant intactId="EBI-456129">
        <id>Q13618</id>
        <label>CUL3</label>
    </interactant>
    <organismsDiffer>false</organismsDiffer>
    <experiments>6</experiments>
</comment>
<comment type="subcellular location">
    <subcellularLocation>
        <location evidence="3">Nucleus</location>
    </subcellularLocation>
    <subcellularLocation>
        <location evidence="1">Cytoplasm</location>
    </subcellularLocation>
    <text evidence="1">Colocalizes with KCTD20 in filamentous structures.</text>
</comment>
<comment type="alternative products">
    <event type="alternative splicing"/>
    <isoform>
        <id>Q9BSF8-1</id>
        <name>1</name>
        <sequence type="displayed"/>
    </isoform>
    <isoform>
        <id>Q9BSF8-2</id>
        <name>2</name>
        <sequence type="described" ref="VSP_055552"/>
    </isoform>
</comment>
<comment type="tissue specificity">
    <text evidence="3 4">Ubiquitously expressed. Highly expressed in adult brain, testis, aorta and small intestine and weakly expressed in the heart, lung, liver, kidney, pancreas, spleen, thymus, prostate, ovary and colon. Down-regulated in glioma.</text>
</comment>
<protein>
    <recommendedName>
        <fullName>BTB/POZ domain-containing protein 10</fullName>
    </recommendedName>
    <alternativeName>
        <fullName evidence="6">Glucose metabolism-related protein 1</fullName>
    </alternativeName>
</protein>
<reference key="1">
    <citation type="journal article" date="2004" name="Gene">
        <title>Molecular cloning and characterization of a novel human BTB domain-containing gene, BTBD10, which is down-regulated in glioma.</title>
        <authorList>
            <person name="Chen J."/>
            <person name="Xu J."/>
            <person name="Ying K."/>
            <person name="Cao G."/>
            <person name="Hu G."/>
            <person name="Wang L."/>
            <person name="Luo C."/>
            <person name="Lou M."/>
            <person name="Mao Y."/>
            <person name="Xie Y."/>
            <person name="Lu Y."/>
        </authorList>
    </citation>
    <scope>NUCLEOTIDE SEQUENCE [MRNA] (ISOFORM 1)</scope>
    <scope>SUBCELLULAR LOCATION</scope>
    <scope>TISSUE SPECIFICITY</scope>
</reference>
<reference key="2">
    <citation type="journal article" date="2004" name="Nat. Genet.">
        <title>Complete sequencing and characterization of 21,243 full-length human cDNAs.</title>
        <authorList>
            <person name="Ota T."/>
            <person name="Suzuki Y."/>
            <person name="Nishikawa T."/>
            <person name="Otsuki T."/>
            <person name="Sugiyama T."/>
            <person name="Irie R."/>
            <person name="Wakamatsu A."/>
            <person name="Hayashi K."/>
            <person name="Sato H."/>
            <person name="Nagai K."/>
            <person name="Kimura K."/>
            <person name="Makita H."/>
            <person name="Sekine M."/>
            <person name="Obayashi M."/>
            <person name="Nishi T."/>
            <person name="Shibahara T."/>
            <person name="Tanaka T."/>
            <person name="Ishii S."/>
            <person name="Yamamoto J."/>
            <person name="Saito K."/>
            <person name="Kawai Y."/>
            <person name="Isono Y."/>
            <person name="Nakamura Y."/>
            <person name="Nagahari K."/>
            <person name="Murakami K."/>
            <person name="Yasuda T."/>
            <person name="Iwayanagi T."/>
            <person name="Wagatsuma M."/>
            <person name="Shiratori A."/>
            <person name="Sudo H."/>
            <person name="Hosoiri T."/>
            <person name="Kaku Y."/>
            <person name="Kodaira H."/>
            <person name="Kondo H."/>
            <person name="Sugawara M."/>
            <person name="Takahashi M."/>
            <person name="Kanda K."/>
            <person name="Yokoi T."/>
            <person name="Furuya T."/>
            <person name="Kikkawa E."/>
            <person name="Omura Y."/>
            <person name="Abe K."/>
            <person name="Kamihara K."/>
            <person name="Katsuta N."/>
            <person name="Sato K."/>
            <person name="Tanikawa M."/>
            <person name="Yamazaki M."/>
            <person name="Ninomiya K."/>
            <person name="Ishibashi T."/>
            <person name="Yamashita H."/>
            <person name="Murakawa K."/>
            <person name="Fujimori K."/>
            <person name="Tanai H."/>
            <person name="Kimata M."/>
            <person name="Watanabe M."/>
            <person name="Hiraoka S."/>
            <person name="Chiba Y."/>
            <person name="Ishida S."/>
            <person name="Ono Y."/>
            <person name="Takiguchi S."/>
            <person name="Watanabe S."/>
            <person name="Yosida M."/>
            <person name="Hotuta T."/>
            <person name="Kusano J."/>
            <person name="Kanehori K."/>
            <person name="Takahashi-Fujii A."/>
            <person name="Hara H."/>
            <person name="Tanase T.-O."/>
            <person name="Nomura Y."/>
            <person name="Togiya S."/>
            <person name="Komai F."/>
            <person name="Hara R."/>
            <person name="Takeuchi K."/>
            <person name="Arita M."/>
            <person name="Imose N."/>
            <person name="Musashino K."/>
            <person name="Yuuki H."/>
            <person name="Oshima A."/>
            <person name="Sasaki N."/>
            <person name="Aotsuka S."/>
            <person name="Yoshikawa Y."/>
            <person name="Matsunawa H."/>
            <person name="Ichihara T."/>
            <person name="Shiohata N."/>
            <person name="Sano S."/>
            <person name="Moriya S."/>
            <person name="Momiyama H."/>
            <person name="Satoh N."/>
            <person name="Takami S."/>
            <person name="Terashima Y."/>
            <person name="Suzuki O."/>
            <person name="Nakagawa S."/>
            <person name="Senoh A."/>
            <person name="Mizoguchi H."/>
            <person name="Goto Y."/>
            <person name="Shimizu F."/>
            <person name="Wakebe H."/>
            <person name="Hishigaki H."/>
            <person name="Watanabe T."/>
            <person name="Sugiyama A."/>
            <person name="Takemoto M."/>
            <person name="Kawakami B."/>
            <person name="Yamazaki M."/>
            <person name="Watanabe K."/>
            <person name="Kumagai A."/>
            <person name="Itakura S."/>
            <person name="Fukuzumi Y."/>
            <person name="Fujimori Y."/>
            <person name="Komiyama M."/>
            <person name="Tashiro H."/>
            <person name="Tanigami A."/>
            <person name="Fujiwara T."/>
            <person name="Ono T."/>
            <person name="Yamada K."/>
            <person name="Fujii Y."/>
            <person name="Ozaki K."/>
            <person name="Hirao M."/>
            <person name="Ohmori Y."/>
            <person name="Kawabata A."/>
            <person name="Hikiji T."/>
            <person name="Kobatake N."/>
            <person name="Inagaki H."/>
            <person name="Ikema Y."/>
            <person name="Okamoto S."/>
            <person name="Okitani R."/>
            <person name="Kawakami T."/>
            <person name="Noguchi S."/>
            <person name="Itoh T."/>
            <person name="Shigeta K."/>
            <person name="Senba T."/>
            <person name="Matsumura K."/>
            <person name="Nakajima Y."/>
            <person name="Mizuno T."/>
            <person name="Morinaga M."/>
            <person name="Sasaki M."/>
            <person name="Togashi T."/>
            <person name="Oyama M."/>
            <person name="Hata H."/>
            <person name="Watanabe M."/>
            <person name="Komatsu T."/>
            <person name="Mizushima-Sugano J."/>
            <person name="Satoh T."/>
            <person name="Shirai Y."/>
            <person name="Takahashi Y."/>
            <person name="Nakagawa K."/>
            <person name="Okumura K."/>
            <person name="Nagase T."/>
            <person name="Nomura N."/>
            <person name="Kikuchi H."/>
            <person name="Masuho Y."/>
            <person name="Yamashita R."/>
            <person name="Nakai K."/>
            <person name="Yada T."/>
            <person name="Nakamura Y."/>
            <person name="Ohara O."/>
            <person name="Isogai T."/>
            <person name="Sugano S."/>
        </authorList>
    </citation>
    <scope>NUCLEOTIDE SEQUENCE [LARGE SCALE MRNA] (ISOFORM 2)</scope>
    <source>
        <tissue>Amygdala</tissue>
        <tissue>Brain</tissue>
    </source>
</reference>
<reference key="3">
    <citation type="journal article" date="2007" name="BMC Genomics">
        <title>The full-ORF clone resource of the German cDNA consortium.</title>
        <authorList>
            <person name="Bechtel S."/>
            <person name="Rosenfelder H."/>
            <person name="Duda A."/>
            <person name="Schmidt C.P."/>
            <person name="Ernst U."/>
            <person name="Wellenreuther R."/>
            <person name="Mehrle A."/>
            <person name="Schuster C."/>
            <person name="Bahr A."/>
            <person name="Bloecker H."/>
            <person name="Heubner D."/>
            <person name="Hoerlein A."/>
            <person name="Michel G."/>
            <person name="Wedler H."/>
            <person name="Koehrer K."/>
            <person name="Ottenwaelder B."/>
            <person name="Poustka A."/>
            <person name="Wiemann S."/>
            <person name="Schupp I."/>
        </authorList>
    </citation>
    <scope>NUCLEOTIDE SEQUENCE [LARGE SCALE MRNA] (ISOFORM 1)</scope>
    <source>
        <tissue>Stomach</tissue>
    </source>
</reference>
<reference key="4">
    <citation type="journal article" date="2006" name="Nature">
        <title>Human chromosome 11 DNA sequence and analysis including novel gene identification.</title>
        <authorList>
            <person name="Taylor T.D."/>
            <person name="Noguchi H."/>
            <person name="Totoki Y."/>
            <person name="Toyoda A."/>
            <person name="Kuroki Y."/>
            <person name="Dewar K."/>
            <person name="Lloyd C."/>
            <person name="Itoh T."/>
            <person name="Takeda T."/>
            <person name="Kim D.-W."/>
            <person name="She X."/>
            <person name="Barlow K.F."/>
            <person name="Bloom T."/>
            <person name="Bruford E."/>
            <person name="Chang J.L."/>
            <person name="Cuomo C.A."/>
            <person name="Eichler E."/>
            <person name="FitzGerald M.G."/>
            <person name="Jaffe D.B."/>
            <person name="LaButti K."/>
            <person name="Nicol R."/>
            <person name="Park H.-S."/>
            <person name="Seaman C."/>
            <person name="Sougnez C."/>
            <person name="Yang X."/>
            <person name="Zimmer A.R."/>
            <person name="Zody M.C."/>
            <person name="Birren B.W."/>
            <person name="Nusbaum C."/>
            <person name="Fujiyama A."/>
            <person name="Hattori M."/>
            <person name="Rogers J."/>
            <person name="Lander E.S."/>
            <person name="Sakaki Y."/>
        </authorList>
    </citation>
    <scope>NUCLEOTIDE SEQUENCE [LARGE SCALE GENOMIC DNA]</scope>
</reference>
<reference key="5">
    <citation type="journal article" date="2004" name="Genome Res.">
        <title>The status, quality, and expansion of the NIH full-length cDNA project: the Mammalian Gene Collection (MGC).</title>
        <authorList>
            <consortium name="The MGC Project Team"/>
        </authorList>
    </citation>
    <scope>NUCLEOTIDE SEQUENCE [LARGE SCALE MRNA] (ISOFORM 1)</scope>
    <source>
        <tissue>Muscle</tissue>
    </source>
</reference>
<reference key="6">
    <citation type="journal article" date="2011" name="Diabetologia">
        <title>Glucose metabolism-related protein 1 (GMRP1) regulates pancreatic beta cell proliferation and apoptosis via activation of Akt signalling pathway in rats and mice.</title>
        <authorList>
            <person name="Wang X."/>
            <person name="Liu Y."/>
            <person name="Yang Z."/>
            <person name="Zhang Z."/>
            <person name="Zhou W."/>
            <person name="Ye Z."/>
            <person name="Zhang W."/>
            <person name="Zhang S."/>
            <person name="Yang Z."/>
            <person name="Feng X."/>
            <person name="Chen F."/>
            <person name="Hu R."/>
        </authorList>
    </citation>
    <scope>TISSUE SPECIFICITY</scope>
</reference>
<reference key="7">
    <citation type="journal article" date="2011" name="Sci. Signal.">
        <title>System-wide temporal characterization of the proteome and phosphoproteome of human embryonic stem cell differentiation.</title>
        <authorList>
            <person name="Rigbolt K.T."/>
            <person name="Prokhorova T.A."/>
            <person name="Akimov V."/>
            <person name="Henningsen J."/>
            <person name="Johansen P.T."/>
            <person name="Kratchmarova I."/>
            <person name="Kassem M."/>
            <person name="Mann M."/>
            <person name="Olsen J.V."/>
            <person name="Blagoev B."/>
        </authorList>
    </citation>
    <scope>IDENTIFICATION BY MASS SPECTROMETRY [LARGE SCALE ANALYSIS]</scope>
</reference>
<gene>
    <name type="primary">BTBD10</name>
    <name evidence="6" type="synonym">GMRP1</name>
</gene>
<name>BTBDA_HUMAN</name>
<sequence length="475" mass="53779">MAGRPHPYDGNSSDPENWDRKLHSRPRKLYKHSSTSSRIAKGGVDHTKMSLHGASGGHERSRDRRRSSDRSRDSSHERTESQLTPCIRNVTSPTRQHHVEREKDHSSSRPSSPRPQKASPNGSISSAGNSSRNSSQSSSDGSCKTAGEMVFVYENAKEGARNIRTSERVTLIVDNTRFVVDPSIFTAQPNTMLGRMFGSGREHNFTRPNEKGEYEVAEGIGSTVFRAILDYYKTGIIRCPDGISIPELREACDYLCISFEYSTIKCRDLSALMHELSNDGARRQFEFYLEEMILPLMVASAQSGERECHIVVLTDDDVVDWDEEYPPQMGEEYSQIIYSTKLYRFFKYIENRDVAKSVLKERGLKKIRLGIEGYPTYKEKVKKRPGGRPEVIYNYVQRPFIRMSWEKEEGKSRHVDFQCVKSKSITNLAAAAADIPQDQLVVMHPTPQVDELDILPIHPPSGNSDLDPDAQNPML</sequence>
<accession>Q9BSF8</accession>
<accession>B7Z228</accession>
<accession>Q86WG1</accession>
<feature type="chain" id="PRO_0000228985" description="BTB/POZ domain-containing protein 10">
    <location>
        <begin position="1"/>
        <end position="475"/>
    </location>
</feature>
<feature type="domain" description="BTB">
    <location>
        <begin position="167"/>
        <end position="241"/>
    </location>
</feature>
<feature type="region of interest" description="Disordered" evidence="2">
    <location>
        <begin position="1"/>
        <end position="143"/>
    </location>
</feature>
<feature type="region of interest" description="Interaction with AKT family members" evidence="1">
    <location>
        <begin position="146"/>
        <end position="475"/>
    </location>
</feature>
<feature type="region of interest" description="Disordered" evidence="2">
    <location>
        <begin position="455"/>
        <end position="475"/>
    </location>
</feature>
<feature type="compositionally biased region" description="Basic residues" evidence="2">
    <location>
        <begin position="22"/>
        <end position="31"/>
    </location>
</feature>
<feature type="compositionally biased region" description="Basic and acidic residues" evidence="2">
    <location>
        <begin position="57"/>
        <end position="80"/>
    </location>
</feature>
<feature type="compositionally biased region" description="Polar residues" evidence="2">
    <location>
        <begin position="81"/>
        <end position="94"/>
    </location>
</feature>
<feature type="compositionally biased region" description="Basic and acidic residues" evidence="2">
    <location>
        <begin position="97"/>
        <end position="107"/>
    </location>
</feature>
<feature type="compositionally biased region" description="Low complexity" evidence="2">
    <location>
        <begin position="108"/>
        <end position="142"/>
    </location>
</feature>
<feature type="splice variant" id="VSP_055552" description="In isoform 2." evidence="5">
    <original>MAGRPHPYDGNSSDPENWDRKLHSRPRKLYKHS</original>
    <variation>MPKDADLAFSASLFERAESLYTLISKFFSCFCVSTLAYTKG</variation>
    <location>
        <begin position="1"/>
        <end position="33"/>
    </location>
</feature>
<feature type="sequence variant" id="VAR_033638" description="In dbSNP:rs34185489.">
    <original>T</original>
    <variation>A</variation>
    <location>
        <position position="145"/>
    </location>
</feature>
<proteinExistence type="evidence at protein level"/>
<organism>
    <name type="scientific">Homo sapiens</name>
    <name type="common">Human</name>
    <dbReference type="NCBI Taxonomy" id="9606"/>
    <lineage>
        <taxon>Eukaryota</taxon>
        <taxon>Metazoa</taxon>
        <taxon>Chordata</taxon>
        <taxon>Craniata</taxon>
        <taxon>Vertebrata</taxon>
        <taxon>Euteleostomi</taxon>
        <taxon>Mammalia</taxon>
        <taxon>Eutheria</taxon>
        <taxon>Euarchontoglires</taxon>
        <taxon>Primates</taxon>
        <taxon>Haplorrhini</taxon>
        <taxon>Catarrhini</taxon>
        <taxon>Hominidae</taxon>
        <taxon>Homo</taxon>
    </lineage>
</organism>
<dbReference type="EMBL" id="AY221959">
    <property type="protein sequence ID" value="AAO64360.1"/>
    <property type="molecule type" value="mRNA"/>
</dbReference>
<dbReference type="EMBL" id="AK294259">
    <property type="protein sequence ID" value="BAH11714.1"/>
    <property type="molecule type" value="mRNA"/>
</dbReference>
<dbReference type="EMBL" id="AK316163">
    <property type="protein sequence ID" value="BAH14534.1"/>
    <property type="molecule type" value="mRNA"/>
</dbReference>
<dbReference type="EMBL" id="AL832981">
    <property type="protein sequence ID" value="CAH56329.1"/>
    <property type="molecule type" value="mRNA"/>
</dbReference>
<dbReference type="EMBL" id="AC016884">
    <property type="status" value="NOT_ANNOTATED_CDS"/>
    <property type="molecule type" value="Genomic_DNA"/>
</dbReference>
<dbReference type="EMBL" id="AC021269">
    <property type="status" value="NOT_ANNOTATED_CDS"/>
    <property type="molecule type" value="Genomic_DNA"/>
</dbReference>
<dbReference type="EMBL" id="BC005071">
    <property type="protein sequence ID" value="AAH05071.2"/>
    <property type="molecule type" value="mRNA"/>
</dbReference>
<dbReference type="CCDS" id="CCDS73261.1">
    <molecule id="Q9BSF8-2"/>
</dbReference>
<dbReference type="CCDS" id="CCDS7811.1">
    <molecule id="Q9BSF8-1"/>
</dbReference>
<dbReference type="RefSeq" id="NP_001284671.1">
    <molecule id="Q9BSF8-2"/>
    <property type="nucleotide sequence ID" value="NM_001297742.2"/>
</dbReference>
<dbReference type="RefSeq" id="NP_115696.2">
    <molecule id="Q9BSF8-1"/>
    <property type="nucleotide sequence ID" value="NM_032320.6"/>
</dbReference>
<dbReference type="RefSeq" id="XP_016873897.1">
    <property type="nucleotide sequence ID" value="XM_017018408.1"/>
</dbReference>
<dbReference type="RefSeq" id="XP_024304481.1">
    <molecule id="Q9BSF8-1"/>
    <property type="nucleotide sequence ID" value="XM_024448713.2"/>
</dbReference>
<dbReference type="RefSeq" id="XP_047283651.1">
    <molecule id="Q9BSF8-1"/>
    <property type="nucleotide sequence ID" value="XM_047427695.1"/>
</dbReference>
<dbReference type="RefSeq" id="XP_054226141.1">
    <molecule id="Q9BSF8-1"/>
    <property type="nucleotide sequence ID" value="XM_054370166.1"/>
</dbReference>
<dbReference type="RefSeq" id="XP_054226142.1">
    <molecule id="Q9BSF8-1"/>
    <property type="nucleotide sequence ID" value="XM_054370167.1"/>
</dbReference>
<dbReference type="SMR" id="Q9BSF8"/>
<dbReference type="BioGRID" id="124007">
    <property type="interactions" value="19"/>
</dbReference>
<dbReference type="FunCoup" id="Q9BSF8">
    <property type="interactions" value="4245"/>
</dbReference>
<dbReference type="IntAct" id="Q9BSF8">
    <property type="interactions" value="17"/>
</dbReference>
<dbReference type="MINT" id="Q9BSF8"/>
<dbReference type="STRING" id="9606.ENSP00000431186"/>
<dbReference type="GlyGen" id="Q9BSF8">
    <property type="glycosylation" value="1 site, 1 O-linked glycan (1 site)"/>
</dbReference>
<dbReference type="iPTMnet" id="Q9BSF8"/>
<dbReference type="PhosphoSitePlus" id="Q9BSF8"/>
<dbReference type="BioMuta" id="BTBD10"/>
<dbReference type="DMDM" id="74733002"/>
<dbReference type="jPOST" id="Q9BSF8"/>
<dbReference type="MassIVE" id="Q9BSF8"/>
<dbReference type="PaxDb" id="9606-ENSP00000431186"/>
<dbReference type="PeptideAtlas" id="Q9BSF8"/>
<dbReference type="ProteomicsDB" id="6400"/>
<dbReference type="ProteomicsDB" id="78886">
    <molecule id="Q9BSF8-1"/>
</dbReference>
<dbReference type="Pumba" id="Q9BSF8"/>
<dbReference type="Antibodypedia" id="24598">
    <property type="antibodies" value="205 antibodies from 21 providers"/>
</dbReference>
<dbReference type="DNASU" id="84280"/>
<dbReference type="Ensembl" id="ENST00000278174.10">
    <molecule id="Q9BSF8-1"/>
    <property type="protein sequence ID" value="ENSP00000278174.5"/>
    <property type="gene ID" value="ENSG00000148925.11"/>
</dbReference>
<dbReference type="Ensembl" id="ENST00000530907.5">
    <molecule id="Q9BSF8-2"/>
    <property type="protein sequence ID" value="ENSP00000431186.1"/>
    <property type="gene ID" value="ENSG00000148925.11"/>
</dbReference>
<dbReference type="GeneID" id="84280"/>
<dbReference type="KEGG" id="hsa:84280"/>
<dbReference type="MANE-Select" id="ENST00000278174.10">
    <property type="protein sequence ID" value="ENSP00000278174.5"/>
    <property type="RefSeq nucleotide sequence ID" value="NM_032320.7"/>
    <property type="RefSeq protein sequence ID" value="NP_115696.2"/>
</dbReference>
<dbReference type="UCSC" id="uc001mkz.4">
    <molecule id="Q9BSF8-1"/>
    <property type="organism name" value="human"/>
</dbReference>
<dbReference type="AGR" id="HGNC:21445"/>
<dbReference type="CTD" id="84280"/>
<dbReference type="DisGeNET" id="84280"/>
<dbReference type="GeneCards" id="BTBD10"/>
<dbReference type="HGNC" id="HGNC:21445">
    <property type="gene designation" value="BTBD10"/>
</dbReference>
<dbReference type="HPA" id="ENSG00000148925">
    <property type="expression patterns" value="Low tissue specificity"/>
</dbReference>
<dbReference type="MIM" id="615933">
    <property type="type" value="gene"/>
</dbReference>
<dbReference type="neXtProt" id="NX_Q9BSF8"/>
<dbReference type="OpenTargets" id="ENSG00000148925"/>
<dbReference type="PharmGKB" id="PA142672543"/>
<dbReference type="VEuPathDB" id="HostDB:ENSG00000148925"/>
<dbReference type="eggNOG" id="KOG3840">
    <property type="taxonomic scope" value="Eukaryota"/>
</dbReference>
<dbReference type="GeneTree" id="ENSGT00390000007975"/>
<dbReference type="InParanoid" id="Q9BSF8"/>
<dbReference type="OMA" id="PLANEPH"/>
<dbReference type="OrthoDB" id="10034757at2759"/>
<dbReference type="PAN-GO" id="Q9BSF8">
    <property type="GO annotations" value="2 GO annotations based on evolutionary models"/>
</dbReference>
<dbReference type="PhylomeDB" id="Q9BSF8"/>
<dbReference type="TreeFam" id="TF314369"/>
<dbReference type="PathwayCommons" id="Q9BSF8"/>
<dbReference type="SignaLink" id="Q9BSF8"/>
<dbReference type="BioGRID-ORCS" id="84280">
    <property type="hits" value="17 hits in 1192 CRISPR screens"/>
</dbReference>
<dbReference type="ChiTaRS" id="BTBD10">
    <property type="organism name" value="human"/>
</dbReference>
<dbReference type="GenomeRNAi" id="84280"/>
<dbReference type="Pharos" id="Q9BSF8">
    <property type="development level" value="Tbio"/>
</dbReference>
<dbReference type="PRO" id="PR:Q9BSF8"/>
<dbReference type="Proteomes" id="UP000005640">
    <property type="component" value="Chromosome 11"/>
</dbReference>
<dbReference type="RNAct" id="Q9BSF8">
    <property type="molecule type" value="protein"/>
</dbReference>
<dbReference type="Bgee" id="ENSG00000148925">
    <property type="expression patterns" value="Expressed in secondary oocyte and 197 other cell types or tissues"/>
</dbReference>
<dbReference type="ExpressionAtlas" id="Q9BSF8">
    <property type="expression patterns" value="baseline and differential"/>
</dbReference>
<dbReference type="GO" id="GO:0005737">
    <property type="term" value="C:cytoplasm"/>
    <property type="evidence" value="ECO:0000250"/>
    <property type="project" value="UniProtKB"/>
</dbReference>
<dbReference type="GO" id="GO:0001650">
    <property type="term" value="C:fibrillar center"/>
    <property type="evidence" value="ECO:0000314"/>
    <property type="project" value="HPA"/>
</dbReference>
<dbReference type="GO" id="GO:0005654">
    <property type="term" value="C:nucleoplasm"/>
    <property type="evidence" value="ECO:0000314"/>
    <property type="project" value="HPA"/>
</dbReference>
<dbReference type="GO" id="GO:0051897">
    <property type="term" value="P:positive regulation of phosphatidylinositol 3-kinase/protein kinase B signal transduction"/>
    <property type="evidence" value="ECO:0000250"/>
    <property type="project" value="UniProtKB"/>
</dbReference>
<dbReference type="GO" id="GO:0044342">
    <property type="term" value="P:type B pancreatic cell proliferation"/>
    <property type="evidence" value="ECO:0000250"/>
    <property type="project" value="UniProtKB"/>
</dbReference>
<dbReference type="CDD" id="cd18385">
    <property type="entry name" value="BTB_POZ_BTBD10_GMRP1"/>
    <property type="match status" value="1"/>
</dbReference>
<dbReference type="FunFam" id="3.30.710.10:FF:000017">
    <property type="entry name" value="BTB/POZ domain-containing protein 10 isoform X1"/>
    <property type="match status" value="1"/>
</dbReference>
<dbReference type="Gene3D" id="3.30.710.10">
    <property type="entry name" value="Potassium Channel Kv1.1, Chain A"/>
    <property type="match status" value="1"/>
</dbReference>
<dbReference type="InterPro" id="IPR000210">
    <property type="entry name" value="BTB/POZ_dom"/>
</dbReference>
<dbReference type="InterPro" id="IPR039886">
    <property type="entry name" value="BTBD10/KCTD20"/>
</dbReference>
<dbReference type="InterPro" id="IPR039885">
    <property type="entry name" value="BTBD10/KCTD20_BTB/POZ"/>
</dbReference>
<dbReference type="InterPro" id="IPR011333">
    <property type="entry name" value="SKP1/BTB/POZ_sf"/>
</dbReference>
<dbReference type="PANTHER" id="PTHR21637">
    <property type="entry name" value="BTB/POZ DOMAIN-CONTAINING PROTEIN 10-RELATED"/>
    <property type="match status" value="1"/>
</dbReference>
<dbReference type="PANTHER" id="PTHR21637:SF5">
    <property type="entry name" value="BTB_POZ DOMAIN-CONTAINING PROTEIN 10"/>
    <property type="match status" value="1"/>
</dbReference>
<dbReference type="Pfam" id="PF16017">
    <property type="entry name" value="BTB_3"/>
    <property type="match status" value="1"/>
</dbReference>
<dbReference type="SMART" id="SM00225">
    <property type="entry name" value="BTB"/>
    <property type="match status" value="1"/>
</dbReference>
<dbReference type="SUPFAM" id="SSF54695">
    <property type="entry name" value="POZ domain"/>
    <property type="match status" value="1"/>
</dbReference>
<keyword id="KW-0025">Alternative splicing</keyword>
<keyword id="KW-0963">Cytoplasm</keyword>
<keyword id="KW-0539">Nucleus</keyword>
<keyword id="KW-1267">Proteomics identification</keyword>
<keyword id="KW-1185">Reference proteome</keyword>
<evidence type="ECO:0000250" key="1">
    <source>
        <dbReference type="UniProtKB" id="Q80X66"/>
    </source>
</evidence>
<evidence type="ECO:0000256" key="2">
    <source>
        <dbReference type="SAM" id="MobiDB-lite"/>
    </source>
</evidence>
<evidence type="ECO:0000269" key="3">
    <source>
    </source>
</evidence>
<evidence type="ECO:0000269" key="4">
    <source>
    </source>
</evidence>
<evidence type="ECO:0000303" key="5">
    <source>
    </source>
</evidence>
<evidence type="ECO:0000303" key="6">
    <source>
    </source>
</evidence>